<proteinExistence type="inferred from homology"/>
<keyword id="KW-0067">ATP-binding</keyword>
<keyword id="KW-0963">Cytoplasm</keyword>
<keyword id="KW-0227">DNA damage</keyword>
<keyword id="KW-0228">DNA excision</keyword>
<keyword id="KW-0234">DNA repair</keyword>
<keyword id="KW-0267">Excision nuclease</keyword>
<keyword id="KW-0547">Nucleotide-binding</keyword>
<keyword id="KW-0742">SOS response</keyword>
<reference key="1">
    <citation type="journal article" date="2004" name="J. Bacteriol.">
        <title>Comparative genomics of two Leptospira interrogans serovars reveals novel insights into physiology and pathogenesis.</title>
        <authorList>
            <person name="Nascimento A.L.T.O."/>
            <person name="Ko A.I."/>
            <person name="Martins E.A.L."/>
            <person name="Monteiro-Vitorello C.B."/>
            <person name="Ho P.L."/>
            <person name="Haake D.A."/>
            <person name="Verjovski-Almeida S."/>
            <person name="Hartskeerl R.A."/>
            <person name="Marques M.V."/>
            <person name="Oliveira M.C."/>
            <person name="Menck C.F.M."/>
            <person name="Leite L.C.C."/>
            <person name="Carrer H."/>
            <person name="Coutinho L.L."/>
            <person name="Degrave W.M."/>
            <person name="Dellagostin O.A."/>
            <person name="El-Dorry H."/>
            <person name="Ferro E.S."/>
            <person name="Ferro M.I.T."/>
            <person name="Furlan L.R."/>
            <person name="Gamberini M."/>
            <person name="Giglioti E.A."/>
            <person name="Goes-Neto A."/>
            <person name="Goldman G.H."/>
            <person name="Goldman M.H.S."/>
            <person name="Harakava R."/>
            <person name="Jeronimo S.M.B."/>
            <person name="Junqueira-de-Azevedo I.L.M."/>
            <person name="Kimura E.T."/>
            <person name="Kuramae E.E."/>
            <person name="Lemos E.G.M."/>
            <person name="Lemos M.V.F."/>
            <person name="Marino C.L."/>
            <person name="Nunes L.R."/>
            <person name="de Oliveira R.C."/>
            <person name="Pereira G.G."/>
            <person name="Reis M.S."/>
            <person name="Schriefer A."/>
            <person name="Siqueira W.J."/>
            <person name="Sommer P."/>
            <person name="Tsai S.M."/>
            <person name="Simpson A.J.G."/>
            <person name="Ferro J.A."/>
            <person name="Camargo L.E.A."/>
            <person name="Kitajima J.P."/>
            <person name="Setubal J.C."/>
            <person name="Van Sluys M.A."/>
        </authorList>
    </citation>
    <scope>NUCLEOTIDE SEQUENCE [LARGE SCALE GENOMIC DNA]</scope>
    <source>
        <strain>Fiocruz L1-130</strain>
    </source>
</reference>
<name>UVRB_LEPIC</name>
<dbReference type="EMBL" id="AE016823">
    <property type="protein sequence ID" value="AAS71492.1"/>
    <property type="molecule type" value="Genomic_DNA"/>
</dbReference>
<dbReference type="RefSeq" id="WP_000179030.1">
    <property type="nucleotide sequence ID" value="NC_005823.1"/>
</dbReference>
<dbReference type="SMR" id="Q72N95"/>
<dbReference type="GeneID" id="61142818"/>
<dbReference type="KEGG" id="lic:LIC_12941"/>
<dbReference type="HOGENOM" id="CLU_009621_2_1_12"/>
<dbReference type="Proteomes" id="UP000007037">
    <property type="component" value="Chromosome I"/>
</dbReference>
<dbReference type="GO" id="GO:0005737">
    <property type="term" value="C:cytoplasm"/>
    <property type="evidence" value="ECO:0007669"/>
    <property type="project" value="UniProtKB-SubCell"/>
</dbReference>
<dbReference type="GO" id="GO:0009380">
    <property type="term" value="C:excinuclease repair complex"/>
    <property type="evidence" value="ECO:0007669"/>
    <property type="project" value="InterPro"/>
</dbReference>
<dbReference type="GO" id="GO:0005524">
    <property type="term" value="F:ATP binding"/>
    <property type="evidence" value="ECO:0007669"/>
    <property type="project" value="UniProtKB-UniRule"/>
</dbReference>
<dbReference type="GO" id="GO:0016887">
    <property type="term" value="F:ATP hydrolysis activity"/>
    <property type="evidence" value="ECO:0007669"/>
    <property type="project" value="InterPro"/>
</dbReference>
<dbReference type="GO" id="GO:0003677">
    <property type="term" value="F:DNA binding"/>
    <property type="evidence" value="ECO:0007669"/>
    <property type="project" value="UniProtKB-UniRule"/>
</dbReference>
<dbReference type="GO" id="GO:0009381">
    <property type="term" value="F:excinuclease ABC activity"/>
    <property type="evidence" value="ECO:0007669"/>
    <property type="project" value="UniProtKB-UniRule"/>
</dbReference>
<dbReference type="GO" id="GO:0006289">
    <property type="term" value="P:nucleotide-excision repair"/>
    <property type="evidence" value="ECO:0007669"/>
    <property type="project" value="UniProtKB-UniRule"/>
</dbReference>
<dbReference type="GO" id="GO:0009432">
    <property type="term" value="P:SOS response"/>
    <property type="evidence" value="ECO:0007669"/>
    <property type="project" value="UniProtKB-UniRule"/>
</dbReference>
<dbReference type="CDD" id="cd17916">
    <property type="entry name" value="DEXHc_UvrB"/>
    <property type="match status" value="1"/>
</dbReference>
<dbReference type="CDD" id="cd18790">
    <property type="entry name" value="SF2_C_UvrB"/>
    <property type="match status" value="1"/>
</dbReference>
<dbReference type="Gene3D" id="3.40.50.300">
    <property type="entry name" value="P-loop containing nucleotide triphosphate hydrolases"/>
    <property type="match status" value="3"/>
</dbReference>
<dbReference type="Gene3D" id="4.10.860.10">
    <property type="entry name" value="UVR domain"/>
    <property type="match status" value="1"/>
</dbReference>
<dbReference type="HAMAP" id="MF_00204">
    <property type="entry name" value="UvrB"/>
    <property type="match status" value="1"/>
</dbReference>
<dbReference type="InterPro" id="IPR006935">
    <property type="entry name" value="Helicase/UvrB_N"/>
</dbReference>
<dbReference type="InterPro" id="IPR014001">
    <property type="entry name" value="Helicase_ATP-bd"/>
</dbReference>
<dbReference type="InterPro" id="IPR001650">
    <property type="entry name" value="Helicase_C-like"/>
</dbReference>
<dbReference type="InterPro" id="IPR027417">
    <property type="entry name" value="P-loop_NTPase"/>
</dbReference>
<dbReference type="InterPro" id="IPR001943">
    <property type="entry name" value="UVR_dom"/>
</dbReference>
<dbReference type="InterPro" id="IPR036876">
    <property type="entry name" value="UVR_dom_sf"/>
</dbReference>
<dbReference type="InterPro" id="IPR004807">
    <property type="entry name" value="UvrB"/>
</dbReference>
<dbReference type="InterPro" id="IPR041471">
    <property type="entry name" value="UvrB_inter"/>
</dbReference>
<dbReference type="InterPro" id="IPR024759">
    <property type="entry name" value="UvrB_YAD/RRR_dom"/>
</dbReference>
<dbReference type="NCBIfam" id="NF003673">
    <property type="entry name" value="PRK05298.1"/>
    <property type="match status" value="1"/>
</dbReference>
<dbReference type="NCBIfam" id="TIGR00631">
    <property type="entry name" value="uvrb"/>
    <property type="match status" value="1"/>
</dbReference>
<dbReference type="PANTHER" id="PTHR24029">
    <property type="entry name" value="UVRABC SYSTEM PROTEIN B"/>
    <property type="match status" value="1"/>
</dbReference>
<dbReference type="PANTHER" id="PTHR24029:SF0">
    <property type="entry name" value="UVRABC SYSTEM PROTEIN B"/>
    <property type="match status" value="1"/>
</dbReference>
<dbReference type="Pfam" id="PF00271">
    <property type="entry name" value="Helicase_C"/>
    <property type="match status" value="1"/>
</dbReference>
<dbReference type="Pfam" id="PF04851">
    <property type="entry name" value="ResIII"/>
    <property type="match status" value="1"/>
</dbReference>
<dbReference type="Pfam" id="PF02151">
    <property type="entry name" value="UVR"/>
    <property type="match status" value="1"/>
</dbReference>
<dbReference type="Pfam" id="PF12344">
    <property type="entry name" value="UvrB"/>
    <property type="match status" value="1"/>
</dbReference>
<dbReference type="Pfam" id="PF17757">
    <property type="entry name" value="UvrB_inter"/>
    <property type="match status" value="1"/>
</dbReference>
<dbReference type="SMART" id="SM00487">
    <property type="entry name" value="DEXDc"/>
    <property type="match status" value="1"/>
</dbReference>
<dbReference type="SMART" id="SM00490">
    <property type="entry name" value="HELICc"/>
    <property type="match status" value="1"/>
</dbReference>
<dbReference type="SUPFAM" id="SSF46600">
    <property type="entry name" value="C-terminal UvrC-binding domain of UvrB"/>
    <property type="match status" value="1"/>
</dbReference>
<dbReference type="SUPFAM" id="SSF52540">
    <property type="entry name" value="P-loop containing nucleoside triphosphate hydrolases"/>
    <property type="match status" value="2"/>
</dbReference>
<dbReference type="PROSITE" id="PS51192">
    <property type="entry name" value="HELICASE_ATP_BIND_1"/>
    <property type="match status" value="1"/>
</dbReference>
<dbReference type="PROSITE" id="PS51194">
    <property type="entry name" value="HELICASE_CTER"/>
    <property type="match status" value="1"/>
</dbReference>
<dbReference type="PROSITE" id="PS50151">
    <property type="entry name" value="UVR"/>
    <property type="match status" value="1"/>
</dbReference>
<protein>
    <recommendedName>
        <fullName evidence="1">UvrABC system protein B</fullName>
        <shortName evidence="1">Protein UvrB</shortName>
    </recommendedName>
    <alternativeName>
        <fullName evidence="1">Excinuclease ABC subunit B</fullName>
    </alternativeName>
</protein>
<accession>Q72N95</accession>
<evidence type="ECO:0000255" key="1">
    <source>
        <dbReference type="HAMAP-Rule" id="MF_00204"/>
    </source>
</evidence>
<gene>
    <name evidence="1" type="primary">uvrB</name>
    <name type="ordered locus">LIC_12941</name>
</gene>
<feature type="chain" id="PRO_0000138401" description="UvrABC system protein B">
    <location>
        <begin position="1"/>
        <end position="666"/>
    </location>
</feature>
<feature type="domain" description="Helicase ATP-binding" evidence="1">
    <location>
        <begin position="26"/>
        <end position="414"/>
    </location>
</feature>
<feature type="domain" description="Helicase C-terminal" evidence="1">
    <location>
        <begin position="429"/>
        <end position="591"/>
    </location>
</feature>
<feature type="domain" description="UVR" evidence="1">
    <location>
        <begin position="625"/>
        <end position="660"/>
    </location>
</feature>
<feature type="short sequence motif" description="Beta-hairpin">
    <location>
        <begin position="92"/>
        <end position="115"/>
    </location>
</feature>
<feature type="binding site" evidence="1">
    <location>
        <begin position="39"/>
        <end position="46"/>
    </location>
    <ligand>
        <name>ATP</name>
        <dbReference type="ChEBI" id="CHEBI:30616"/>
    </ligand>
</feature>
<comment type="function">
    <text evidence="1">The UvrABC repair system catalyzes the recognition and processing of DNA lesions. A damage recognition complex composed of 2 UvrA and 2 UvrB subunits scans DNA for abnormalities. Upon binding of the UvrA(2)B(2) complex to a putative damaged site, the DNA wraps around one UvrB monomer. DNA wrap is dependent on ATP binding by UvrB and probably causes local melting of the DNA helix, facilitating insertion of UvrB beta-hairpin between the DNA strands. Then UvrB probes one DNA strand for the presence of a lesion. If a lesion is found the UvrA subunits dissociate and the UvrB-DNA preincision complex is formed. This complex is subsequently bound by UvrC and the second UvrB is released. If no lesion is found, the DNA wraps around the other UvrB subunit that will check the other stand for damage.</text>
</comment>
<comment type="subunit">
    <text evidence="1">Forms a heterotetramer with UvrA during the search for lesions. Interacts with UvrC in an incision complex.</text>
</comment>
<comment type="subcellular location">
    <subcellularLocation>
        <location evidence="1">Cytoplasm</location>
    </subcellularLocation>
</comment>
<comment type="domain">
    <text evidence="1">The beta-hairpin motif is involved in DNA binding.</text>
</comment>
<comment type="similarity">
    <text evidence="1">Belongs to the UvrB family.</text>
</comment>
<sequence length="666" mass="75955">MASVFKIHSAYQPAGDQVKAIQNIADSFQKGEKKVTLVGVTGSGKTFTMAQVIQNLGLPTLVLSHNKTLAAQLFREFKEFFPENAVEYFVSYYDYYQPEAYVPSSDTFIEKDSSINEEIDKLRLRATSSLLEREDVVIVSSVSCIYGLGSPEEYTNSVVALKVGDTIERDTVIRKLLHIQYNRNDLDFSRGNFRVRGDSIEIYPAYHTDGIRIEFFGDEIDSISRINPVTAQTIFKLEKAYIYPAKHFITSGPKVKEAVENIRAEVDAQTDFFRKNNKLLEAERILSRTNYDMEMLQEMGYCNGIENYSRHLTGRKPGERPACLIDYFQGEFLLIVDESHVTIPQIGGMFAGDRARKQTLVDFGFRLPSALDNRPLNFQEFETLTPRTLYVSATPAEYEIEKSSKVVEQIIRPTGLLDPIVDVRPTKNQIEDLLVEIRKRIDAGERVLVTTLTKKMSEDLTDYYEEIGLKVAYLHSEVETLDRVGIIRDLRKGIYDVLIGINLLREGLDIPEVSLVAILDADKEGFLRNYKSLIQTIGRAARNVNGTAILYADKTTDSMAKAIEETKRRRKIQEDHNLKFGITPLTIKKEVGDIIEREEKERTSEDLVLEDVEKKFNSKKFPNKEVLKEKLREEMMKAAKELDFERAAILRDKMLSIQTEDSSAKN</sequence>
<organism>
    <name type="scientific">Leptospira interrogans serogroup Icterohaemorrhagiae serovar copenhageni (strain Fiocruz L1-130)</name>
    <dbReference type="NCBI Taxonomy" id="267671"/>
    <lineage>
        <taxon>Bacteria</taxon>
        <taxon>Pseudomonadati</taxon>
        <taxon>Spirochaetota</taxon>
        <taxon>Spirochaetia</taxon>
        <taxon>Leptospirales</taxon>
        <taxon>Leptospiraceae</taxon>
        <taxon>Leptospira</taxon>
    </lineage>
</organism>